<name>DECR_MOUSE</name>
<evidence type="ECO:0000250" key="1"/>
<evidence type="ECO:0000250" key="2">
    <source>
        <dbReference type="UniProtKB" id="Q16698"/>
    </source>
</evidence>
<evidence type="ECO:0000255" key="3"/>
<evidence type="ECO:0000305" key="4"/>
<evidence type="ECO:0007744" key="5">
    <source>
    </source>
</evidence>
<evidence type="ECO:0007744" key="6">
    <source>
    </source>
</evidence>
<evidence type="ECO:0007829" key="7">
    <source>
        <dbReference type="PDB" id="7UCW"/>
    </source>
</evidence>
<feature type="transit peptide" description="Mitochondrion" evidence="1">
    <location>
        <begin position="1"/>
        <end position="34"/>
    </location>
</feature>
<feature type="chain" id="PRO_0000031966" description="2,4-dienoyl-CoA reductase [(3E)-enoyl-CoA-producing], mitochondrial">
    <location>
        <begin position="35"/>
        <end position="335"/>
    </location>
</feature>
<feature type="active site" description="Proton acceptor" evidence="3">
    <location>
        <position position="199"/>
    </location>
</feature>
<feature type="binding site" evidence="2">
    <location>
        <begin position="66"/>
        <end position="71"/>
    </location>
    <ligand>
        <name>NADP(+)</name>
        <dbReference type="ChEBI" id="CHEBI:58349"/>
    </ligand>
</feature>
<feature type="binding site" evidence="2">
    <location>
        <position position="91"/>
    </location>
    <ligand>
        <name>NADP(+)</name>
        <dbReference type="ChEBI" id="CHEBI:58349"/>
    </ligand>
</feature>
<feature type="binding site" evidence="1">
    <location>
        <position position="91"/>
    </location>
    <ligand>
        <name>substrate</name>
    </ligand>
</feature>
<feature type="binding site" evidence="2">
    <location>
        <position position="117"/>
    </location>
    <ligand>
        <name>NADP(+)</name>
        <dbReference type="ChEBI" id="CHEBI:58349"/>
    </ligand>
</feature>
<feature type="binding site" evidence="2">
    <location>
        <position position="119"/>
    </location>
    <ligand>
        <name>substrate</name>
    </ligand>
</feature>
<feature type="binding site" evidence="2">
    <location>
        <position position="149"/>
    </location>
    <ligand>
        <name>substrate</name>
    </ligand>
</feature>
<feature type="binding site" evidence="2">
    <location>
        <position position="214"/>
    </location>
    <ligand>
        <name>NADP(+)</name>
        <dbReference type="ChEBI" id="CHEBI:58349"/>
    </ligand>
</feature>
<feature type="binding site" evidence="2">
    <location>
        <begin position="240"/>
        <end position="243"/>
    </location>
    <ligand>
        <name>NADP(+)</name>
        <dbReference type="ChEBI" id="CHEBI:58349"/>
    </ligand>
</feature>
<feature type="binding site" evidence="1">
    <location>
        <position position="251"/>
    </location>
    <ligand>
        <name>substrate</name>
    </ligand>
</feature>
<feature type="modified residue" description="N6-acetyllysine; alternate" evidence="5">
    <location>
        <position position="42"/>
    </location>
</feature>
<feature type="modified residue" description="N6-succinyllysine; alternate" evidence="6">
    <location>
        <position position="42"/>
    </location>
</feature>
<feature type="modified residue" description="N6-acetyllysine; alternate" evidence="5">
    <location>
        <position position="49"/>
    </location>
</feature>
<feature type="modified residue" description="N6-succinyllysine; alternate" evidence="6">
    <location>
        <position position="49"/>
    </location>
</feature>
<feature type="modified residue" description="Phosphothreonine" evidence="2">
    <location>
        <position position="69"/>
    </location>
</feature>
<feature type="modified residue" description="N6-succinyllysine" evidence="6">
    <location>
        <position position="73"/>
    </location>
</feature>
<feature type="modified residue" description="N6-acetyllysine; alternate" evidence="5">
    <location>
        <position position="97"/>
    </location>
</feature>
<feature type="modified residue" description="N6-succinyllysine; alternate" evidence="6">
    <location>
        <position position="97"/>
    </location>
</feature>
<feature type="modified residue" description="N6-acetyllysine; alternate" evidence="5 6">
    <location>
        <position position="106"/>
    </location>
</feature>
<feature type="modified residue" description="N6-succinyllysine; alternate" evidence="6">
    <location>
        <position position="106"/>
    </location>
</feature>
<feature type="modified residue" description="N6-acetyllysine; alternate" evidence="5">
    <location>
        <position position="244"/>
    </location>
</feature>
<feature type="modified residue" description="N6-succinyllysine; alternate" evidence="6">
    <location>
        <position position="244"/>
    </location>
</feature>
<feature type="modified residue" description="N6-acetyllysine; alternate" evidence="5">
    <location>
        <position position="260"/>
    </location>
</feature>
<feature type="modified residue" description="N6-succinyllysine; alternate" evidence="6">
    <location>
        <position position="260"/>
    </location>
</feature>
<feature type="modified residue" description="N6-acetyllysine" evidence="5">
    <location>
        <position position="315"/>
    </location>
</feature>
<feature type="modified residue" description="N6-acetyllysine; alternate" evidence="5">
    <location>
        <position position="319"/>
    </location>
</feature>
<feature type="modified residue" description="N6-succinyllysine; alternate" evidence="6">
    <location>
        <position position="319"/>
    </location>
</feature>
<feature type="sequence conflict" description="In Ref. 1; BAB22333." evidence="4" ref="1">
    <original>G</original>
    <variation>V</variation>
    <location>
        <position position="203"/>
    </location>
</feature>
<feature type="helix" evidence="7">
    <location>
        <begin position="39"/>
        <end position="43"/>
    </location>
</feature>
<feature type="turn" evidence="7">
    <location>
        <begin position="54"/>
        <end position="59"/>
    </location>
</feature>
<feature type="strand" evidence="7">
    <location>
        <begin position="61"/>
        <end position="65"/>
    </location>
</feature>
<feature type="turn" evidence="7">
    <location>
        <begin position="66"/>
        <end position="68"/>
    </location>
</feature>
<feature type="helix" evidence="7">
    <location>
        <begin position="70"/>
        <end position="81"/>
    </location>
</feature>
<feature type="strand" evidence="7">
    <location>
        <begin position="85"/>
        <end position="91"/>
    </location>
</feature>
<feature type="helix" evidence="7">
    <location>
        <begin position="93"/>
        <end position="107"/>
    </location>
</feature>
<feature type="strand" evidence="7">
    <location>
        <begin position="111"/>
        <end position="115"/>
    </location>
</feature>
<feature type="helix" evidence="7">
    <location>
        <begin position="121"/>
        <end position="134"/>
    </location>
</feature>
<feature type="strand" evidence="7">
    <location>
        <begin position="139"/>
        <end position="143"/>
    </location>
</feature>
<feature type="helix" evidence="7">
    <location>
        <begin position="153"/>
        <end position="155"/>
    </location>
</feature>
<feature type="helix" evidence="7">
    <location>
        <begin position="158"/>
        <end position="186"/>
    </location>
</feature>
<feature type="strand" evidence="7">
    <location>
        <begin position="190"/>
        <end position="195"/>
    </location>
</feature>
<feature type="helix" evidence="7">
    <location>
        <begin position="199"/>
        <end position="202"/>
    </location>
</feature>
<feature type="helix" evidence="7">
    <location>
        <begin position="208"/>
        <end position="228"/>
    </location>
</feature>
<feature type="helix" evidence="7">
    <location>
        <begin position="229"/>
        <end position="231"/>
    </location>
</feature>
<feature type="strand" evidence="7">
    <location>
        <begin position="233"/>
        <end position="240"/>
    </location>
</feature>
<feature type="helix" evidence="7">
    <location>
        <begin position="260"/>
        <end position="263"/>
    </location>
</feature>
<feature type="helix" evidence="7">
    <location>
        <begin position="274"/>
        <end position="285"/>
    </location>
</feature>
<feature type="helix" evidence="7">
    <location>
        <begin position="287"/>
        <end position="289"/>
    </location>
</feature>
<feature type="strand" evidence="7">
    <location>
        <begin position="296"/>
        <end position="300"/>
    </location>
</feature>
<feature type="helix" evidence="7">
    <location>
        <begin position="303"/>
        <end position="308"/>
    </location>
</feature>
<feature type="helix" evidence="7">
    <location>
        <begin position="312"/>
        <end position="316"/>
    </location>
</feature>
<feature type="helix" evidence="7">
    <location>
        <begin position="319"/>
        <end position="325"/>
    </location>
</feature>
<organism>
    <name type="scientific">Mus musculus</name>
    <name type="common">Mouse</name>
    <dbReference type="NCBI Taxonomy" id="10090"/>
    <lineage>
        <taxon>Eukaryota</taxon>
        <taxon>Metazoa</taxon>
        <taxon>Chordata</taxon>
        <taxon>Craniata</taxon>
        <taxon>Vertebrata</taxon>
        <taxon>Euteleostomi</taxon>
        <taxon>Mammalia</taxon>
        <taxon>Eutheria</taxon>
        <taxon>Euarchontoglires</taxon>
        <taxon>Glires</taxon>
        <taxon>Rodentia</taxon>
        <taxon>Myomorpha</taxon>
        <taxon>Muroidea</taxon>
        <taxon>Muridae</taxon>
        <taxon>Murinae</taxon>
        <taxon>Mus</taxon>
        <taxon>Mus</taxon>
    </lineage>
</organism>
<reference key="1">
    <citation type="journal article" date="2005" name="Science">
        <title>The transcriptional landscape of the mammalian genome.</title>
        <authorList>
            <person name="Carninci P."/>
            <person name="Kasukawa T."/>
            <person name="Katayama S."/>
            <person name="Gough J."/>
            <person name="Frith M.C."/>
            <person name="Maeda N."/>
            <person name="Oyama R."/>
            <person name="Ravasi T."/>
            <person name="Lenhard B."/>
            <person name="Wells C."/>
            <person name="Kodzius R."/>
            <person name="Shimokawa K."/>
            <person name="Bajic V.B."/>
            <person name="Brenner S.E."/>
            <person name="Batalov S."/>
            <person name="Forrest A.R."/>
            <person name="Zavolan M."/>
            <person name="Davis M.J."/>
            <person name="Wilming L.G."/>
            <person name="Aidinis V."/>
            <person name="Allen J.E."/>
            <person name="Ambesi-Impiombato A."/>
            <person name="Apweiler R."/>
            <person name="Aturaliya R.N."/>
            <person name="Bailey T.L."/>
            <person name="Bansal M."/>
            <person name="Baxter L."/>
            <person name="Beisel K.W."/>
            <person name="Bersano T."/>
            <person name="Bono H."/>
            <person name="Chalk A.M."/>
            <person name="Chiu K.P."/>
            <person name="Choudhary V."/>
            <person name="Christoffels A."/>
            <person name="Clutterbuck D.R."/>
            <person name="Crowe M.L."/>
            <person name="Dalla E."/>
            <person name="Dalrymple B.P."/>
            <person name="de Bono B."/>
            <person name="Della Gatta G."/>
            <person name="di Bernardo D."/>
            <person name="Down T."/>
            <person name="Engstrom P."/>
            <person name="Fagiolini M."/>
            <person name="Faulkner G."/>
            <person name="Fletcher C.F."/>
            <person name="Fukushima T."/>
            <person name="Furuno M."/>
            <person name="Futaki S."/>
            <person name="Gariboldi M."/>
            <person name="Georgii-Hemming P."/>
            <person name="Gingeras T.R."/>
            <person name="Gojobori T."/>
            <person name="Green R.E."/>
            <person name="Gustincich S."/>
            <person name="Harbers M."/>
            <person name="Hayashi Y."/>
            <person name="Hensch T.K."/>
            <person name="Hirokawa N."/>
            <person name="Hill D."/>
            <person name="Huminiecki L."/>
            <person name="Iacono M."/>
            <person name="Ikeo K."/>
            <person name="Iwama A."/>
            <person name="Ishikawa T."/>
            <person name="Jakt M."/>
            <person name="Kanapin A."/>
            <person name="Katoh M."/>
            <person name="Kawasawa Y."/>
            <person name="Kelso J."/>
            <person name="Kitamura H."/>
            <person name="Kitano H."/>
            <person name="Kollias G."/>
            <person name="Krishnan S.P."/>
            <person name="Kruger A."/>
            <person name="Kummerfeld S.K."/>
            <person name="Kurochkin I.V."/>
            <person name="Lareau L.F."/>
            <person name="Lazarevic D."/>
            <person name="Lipovich L."/>
            <person name="Liu J."/>
            <person name="Liuni S."/>
            <person name="McWilliam S."/>
            <person name="Madan Babu M."/>
            <person name="Madera M."/>
            <person name="Marchionni L."/>
            <person name="Matsuda H."/>
            <person name="Matsuzawa S."/>
            <person name="Miki H."/>
            <person name="Mignone F."/>
            <person name="Miyake S."/>
            <person name="Morris K."/>
            <person name="Mottagui-Tabar S."/>
            <person name="Mulder N."/>
            <person name="Nakano N."/>
            <person name="Nakauchi H."/>
            <person name="Ng P."/>
            <person name="Nilsson R."/>
            <person name="Nishiguchi S."/>
            <person name="Nishikawa S."/>
            <person name="Nori F."/>
            <person name="Ohara O."/>
            <person name="Okazaki Y."/>
            <person name="Orlando V."/>
            <person name="Pang K.C."/>
            <person name="Pavan W.J."/>
            <person name="Pavesi G."/>
            <person name="Pesole G."/>
            <person name="Petrovsky N."/>
            <person name="Piazza S."/>
            <person name="Reed J."/>
            <person name="Reid J.F."/>
            <person name="Ring B.Z."/>
            <person name="Ringwald M."/>
            <person name="Rost B."/>
            <person name="Ruan Y."/>
            <person name="Salzberg S.L."/>
            <person name="Sandelin A."/>
            <person name="Schneider C."/>
            <person name="Schoenbach C."/>
            <person name="Sekiguchi K."/>
            <person name="Semple C.A."/>
            <person name="Seno S."/>
            <person name="Sessa L."/>
            <person name="Sheng Y."/>
            <person name="Shibata Y."/>
            <person name="Shimada H."/>
            <person name="Shimada K."/>
            <person name="Silva D."/>
            <person name="Sinclair B."/>
            <person name="Sperling S."/>
            <person name="Stupka E."/>
            <person name="Sugiura K."/>
            <person name="Sultana R."/>
            <person name="Takenaka Y."/>
            <person name="Taki K."/>
            <person name="Tammoja K."/>
            <person name="Tan S.L."/>
            <person name="Tang S."/>
            <person name="Taylor M.S."/>
            <person name="Tegner J."/>
            <person name="Teichmann S.A."/>
            <person name="Ueda H.R."/>
            <person name="van Nimwegen E."/>
            <person name="Verardo R."/>
            <person name="Wei C.L."/>
            <person name="Yagi K."/>
            <person name="Yamanishi H."/>
            <person name="Zabarovsky E."/>
            <person name="Zhu S."/>
            <person name="Zimmer A."/>
            <person name="Hide W."/>
            <person name="Bult C."/>
            <person name="Grimmond S.M."/>
            <person name="Teasdale R.D."/>
            <person name="Liu E.T."/>
            <person name="Brusic V."/>
            <person name="Quackenbush J."/>
            <person name="Wahlestedt C."/>
            <person name="Mattick J.S."/>
            <person name="Hume D.A."/>
            <person name="Kai C."/>
            <person name="Sasaki D."/>
            <person name="Tomaru Y."/>
            <person name="Fukuda S."/>
            <person name="Kanamori-Katayama M."/>
            <person name="Suzuki M."/>
            <person name="Aoki J."/>
            <person name="Arakawa T."/>
            <person name="Iida J."/>
            <person name="Imamura K."/>
            <person name="Itoh M."/>
            <person name="Kato T."/>
            <person name="Kawaji H."/>
            <person name="Kawagashira N."/>
            <person name="Kawashima T."/>
            <person name="Kojima M."/>
            <person name="Kondo S."/>
            <person name="Konno H."/>
            <person name="Nakano K."/>
            <person name="Ninomiya N."/>
            <person name="Nishio T."/>
            <person name="Okada M."/>
            <person name="Plessy C."/>
            <person name="Shibata K."/>
            <person name="Shiraki T."/>
            <person name="Suzuki S."/>
            <person name="Tagami M."/>
            <person name="Waki K."/>
            <person name="Watahiki A."/>
            <person name="Okamura-Oho Y."/>
            <person name="Suzuki H."/>
            <person name="Kawai J."/>
            <person name="Hayashizaki Y."/>
        </authorList>
    </citation>
    <scope>NUCLEOTIDE SEQUENCE [LARGE SCALE MRNA]</scope>
    <source>
        <strain>C57BL/6J</strain>
        <tissue>Lung</tissue>
        <tissue>Testis</tissue>
    </source>
</reference>
<reference key="2">
    <citation type="journal article" date="2004" name="Genome Res.">
        <title>The status, quality, and expansion of the NIH full-length cDNA project: the Mammalian Gene Collection (MGC).</title>
        <authorList>
            <consortium name="The MGC Project Team"/>
        </authorList>
    </citation>
    <scope>NUCLEOTIDE SEQUENCE [LARGE SCALE MRNA]</scope>
    <source>
        <tissue>Eye</tissue>
    </source>
</reference>
<reference key="3">
    <citation type="journal article" date="2010" name="Cell">
        <title>A tissue-specific atlas of mouse protein phosphorylation and expression.</title>
        <authorList>
            <person name="Huttlin E.L."/>
            <person name="Jedrychowski M.P."/>
            <person name="Elias J.E."/>
            <person name="Goswami T."/>
            <person name="Rad R."/>
            <person name="Beausoleil S.A."/>
            <person name="Villen J."/>
            <person name="Haas W."/>
            <person name="Sowa M.E."/>
            <person name="Gygi S.P."/>
        </authorList>
    </citation>
    <scope>IDENTIFICATION BY MASS SPECTROMETRY [LARGE SCALE ANALYSIS]</scope>
    <source>
        <tissue>Brain</tissue>
        <tissue>Brown adipose tissue</tissue>
        <tissue>Heart</tissue>
        <tissue>Kidney</tissue>
        <tissue>Liver</tissue>
        <tissue>Lung</tissue>
        <tissue>Pancreas</tissue>
        <tissue>Spleen</tissue>
        <tissue>Testis</tissue>
    </source>
</reference>
<reference key="4">
    <citation type="journal article" date="2013" name="Mol. Cell">
        <title>SIRT5-mediated lysine desuccinylation impacts diverse metabolic pathways.</title>
        <authorList>
            <person name="Park J."/>
            <person name="Chen Y."/>
            <person name="Tishkoff D.X."/>
            <person name="Peng C."/>
            <person name="Tan M."/>
            <person name="Dai L."/>
            <person name="Xie Z."/>
            <person name="Zhang Y."/>
            <person name="Zwaans B.M."/>
            <person name="Skinner M.E."/>
            <person name="Lombard D.B."/>
            <person name="Zhao Y."/>
        </authorList>
    </citation>
    <scope>ACETYLATION [LARGE SCALE ANALYSIS] AT LYS-106</scope>
    <scope>SUCCINYLATION [LARGE SCALE ANALYSIS] AT LYS-42; LYS-49; LYS-73; LYS-97; LYS-106; LYS-244; LYS-260 AND LYS-319</scope>
    <scope>IDENTIFICATION BY MASS SPECTROMETRY [LARGE SCALE ANALYSIS]</scope>
    <source>
        <tissue>Embryonic fibroblast</tissue>
        <tissue>Liver</tissue>
    </source>
</reference>
<reference key="5">
    <citation type="journal article" date="2013" name="Proc. Natl. Acad. Sci. U.S.A.">
        <title>Label-free quantitative proteomics of the lysine acetylome in mitochondria identifies substrates of SIRT3 in metabolic pathways.</title>
        <authorList>
            <person name="Rardin M.J."/>
            <person name="Newman J.C."/>
            <person name="Held J.M."/>
            <person name="Cusack M.P."/>
            <person name="Sorensen D.J."/>
            <person name="Li B."/>
            <person name="Schilling B."/>
            <person name="Mooney S.D."/>
            <person name="Kahn C.R."/>
            <person name="Verdin E."/>
            <person name="Gibson B.W."/>
        </authorList>
    </citation>
    <scope>ACETYLATION [LARGE SCALE ANALYSIS] AT LYS-42; LYS-49; LYS-97; LYS-106; LYS-244; LYS-260; LYS-315 AND LYS-319</scope>
    <scope>IDENTIFICATION BY MASS SPECTROMETRY [LARGE SCALE ANALYSIS]</scope>
    <source>
        <tissue>Liver</tissue>
    </source>
</reference>
<keyword id="KW-0002">3D-structure</keyword>
<keyword id="KW-0007">Acetylation</keyword>
<keyword id="KW-0276">Fatty acid metabolism</keyword>
<keyword id="KW-0443">Lipid metabolism</keyword>
<keyword id="KW-0496">Mitochondrion</keyword>
<keyword id="KW-0521">NADP</keyword>
<keyword id="KW-0560">Oxidoreductase</keyword>
<keyword id="KW-0597">Phosphoprotein</keyword>
<keyword id="KW-1185">Reference proteome</keyword>
<keyword id="KW-0809">Transit peptide</keyword>
<accession>Q9CQ62</accession>
<accession>Q9DCI7</accession>
<dbReference type="EC" id="1.3.1.124" evidence="2"/>
<dbReference type="EMBL" id="AK002756">
    <property type="protein sequence ID" value="BAB22333.1"/>
    <property type="molecule type" value="mRNA"/>
</dbReference>
<dbReference type="EMBL" id="AK004725">
    <property type="protein sequence ID" value="BAB23508.1"/>
    <property type="molecule type" value="mRNA"/>
</dbReference>
<dbReference type="EMBL" id="AK015692">
    <property type="protein sequence ID" value="BAB29933.1"/>
    <property type="molecule type" value="mRNA"/>
</dbReference>
<dbReference type="EMBL" id="BC046972">
    <property type="protein sequence ID" value="AAH46972.1"/>
    <property type="molecule type" value="mRNA"/>
</dbReference>
<dbReference type="CCDS" id="CCDS17985.1"/>
<dbReference type="RefSeq" id="NP_080448.1">
    <property type="nucleotide sequence ID" value="NM_026172.4"/>
</dbReference>
<dbReference type="PDB" id="7UCW">
    <property type="method" value="X-ray"/>
    <property type="resolution" value="1.35 A"/>
    <property type="chains" value="A/B/C/D=35-335"/>
</dbReference>
<dbReference type="PDBsum" id="7UCW"/>
<dbReference type="SMR" id="Q9CQ62"/>
<dbReference type="BioGRID" id="212204">
    <property type="interactions" value="39"/>
</dbReference>
<dbReference type="FunCoup" id="Q9CQ62">
    <property type="interactions" value="1187"/>
</dbReference>
<dbReference type="IntAct" id="Q9CQ62">
    <property type="interactions" value="6"/>
</dbReference>
<dbReference type="STRING" id="10090.ENSMUSP00000029877"/>
<dbReference type="GlyGen" id="Q9CQ62">
    <property type="glycosylation" value="1 site, 1 O-linked glycan (1 site)"/>
</dbReference>
<dbReference type="iPTMnet" id="Q9CQ62"/>
<dbReference type="PhosphoSitePlus" id="Q9CQ62"/>
<dbReference type="SwissPalm" id="Q9CQ62"/>
<dbReference type="jPOST" id="Q9CQ62"/>
<dbReference type="PaxDb" id="10090-ENSMUSP00000029877"/>
<dbReference type="ProteomicsDB" id="279398"/>
<dbReference type="Pumba" id="Q9CQ62"/>
<dbReference type="Antibodypedia" id="12737">
    <property type="antibodies" value="276 antibodies from 28 providers"/>
</dbReference>
<dbReference type="DNASU" id="67460"/>
<dbReference type="Ensembl" id="ENSMUST00000029877.9">
    <property type="protein sequence ID" value="ENSMUSP00000029877.9"/>
    <property type="gene ID" value="ENSMUSG00000028223.9"/>
</dbReference>
<dbReference type="GeneID" id="67460"/>
<dbReference type="KEGG" id="mmu:67460"/>
<dbReference type="UCSC" id="uc008sbm.1">
    <property type="organism name" value="mouse"/>
</dbReference>
<dbReference type="AGR" id="MGI:1914710"/>
<dbReference type="CTD" id="1666"/>
<dbReference type="MGI" id="MGI:1914710">
    <property type="gene designation" value="Decr1"/>
</dbReference>
<dbReference type="VEuPathDB" id="HostDB:ENSMUSG00000028223"/>
<dbReference type="eggNOG" id="KOG0725">
    <property type="taxonomic scope" value="Eukaryota"/>
</dbReference>
<dbReference type="GeneTree" id="ENSGT00940000153801"/>
<dbReference type="HOGENOM" id="CLU_010194_1_2_1"/>
<dbReference type="InParanoid" id="Q9CQ62"/>
<dbReference type="OMA" id="GKAMTKY"/>
<dbReference type="OrthoDB" id="1888931at2759"/>
<dbReference type="PhylomeDB" id="Q9CQ62"/>
<dbReference type="TreeFam" id="TF315256"/>
<dbReference type="BRENDA" id="1.3.1.124">
    <property type="organism ID" value="3474"/>
</dbReference>
<dbReference type="Reactome" id="R-MMU-77288">
    <property type="pathway name" value="mitochondrial fatty acid beta-oxidation of unsaturated fatty acids"/>
</dbReference>
<dbReference type="BioGRID-ORCS" id="67460">
    <property type="hits" value="0 hits in 80 CRISPR screens"/>
</dbReference>
<dbReference type="CD-CODE" id="CE726F99">
    <property type="entry name" value="Postsynaptic density"/>
</dbReference>
<dbReference type="ChiTaRS" id="Decr1">
    <property type="organism name" value="mouse"/>
</dbReference>
<dbReference type="PRO" id="PR:Q9CQ62"/>
<dbReference type="Proteomes" id="UP000000589">
    <property type="component" value="Chromosome 4"/>
</dbReference>
<dbReference type="RNAct" id="Q9CQ62">
    <property type="molecule type" value="protein"/>
</dbReference>
<dbReference type="Bgee" id="ENSMUSG00000028223">
    <property type="expression patterns" value="Expressed in heart right ventricle and 251 other cell types or tissues"/>
</dbReference>
<dbReference type="ExpressionAtlas" id="Q9CQ62">
    <property type="expression patterns" value="baseline and differential"/>
</dbReference>
<dbReference type="GO" id="GO:1902494">
    <property type="term" value="C:catalytic complex"/>
    <property type="evidence" value="ECO:0007669"/>
    <property type="project" value="Ensembl"/>
</dbReference>
<dbReference type="GO" id="GO:0005829">
    <property type="term" value="C:cytosol"/>
    <property type="evidence" value="ECO:0007669"/>
    <property type="project" value="Ensembl"/>
</dbReference>
<dbReference type="GO" id="GO:0005739">
    <property type="term" value="C:mitochondrion"/>
    <property type="evidence" value="ECO:0007005"/>
    <property type="project" value="MGI"/>
</dbReference>
<dbReference type="GO" id="GO:0005654">
    <property type="term" value="C:nucleoplasm"/>
    <property type="evidence" value="ECO:0007669"/>
    <property type="project" value="Ensembl"/>
</dbReference>
<dbReference type="GO" id="GO:0008670">
    <property type="term" value="F:2,4-dienoyl-CoA reductase (NADPH) activity"/>
    <property type="evidence" value="ECO:0000250"/>
    <property type="project" value="UniProtKB"/>
</dbReference>
<dbReference type="GO" id="GO:0042802">
    <property type="term" value="F:identical protein binding"/>
    <property type="evidence" value="ECO:0007669"/>
    <property type="project" value="Ensembl"/>
</dbReference>
<dbReference type="GO" id="GO:0070402">
    <property type="term" value="F:NADPH binding"/>
    <property type="evidence" value="ECO:0007669"/>
    <property type="project" value="Ensembl"/>
</dbReference>
<dbReference type="GO" id="GO:0006635">
    <property type="term" value="P:fatty acid beta-oxidation"/>
    <property type="evidence" value="ECO:0000250"/>
    <property type="project" value="UniProtKB"/>
</dbReference>
<dbReference type="GO" id="GO:0120162">
    <property type="term" value="P:positive regulation of cold-induced thermogenesis"/>
    <property type="evidence" value="ECO:0000315"/>
    <property type="project" value="YuBioLab"/>
</dbReference>
<dbReference type="CDD" id="cd05369">
    <property type="entry name" value="TER_DECR_SDR_a"/>
    <property type="match status" value="1"/>
</dbReference>
<dbReference type="FunFam" id="3.40.50.720:FF:000288">
    <property type="entry name" value="2,4-dienoyl-CoA reductase, mitochondrial"/>
    <property type="match status" value="1"/>
</dbReference>
<dbReference type="Gene3D" id="3.40.50.720">
    <property type="entry name" value="NAD(P)-binding Rossmann-like Domain"/>
    <property type="match status" value="1"/>
</dbReference>
<dbReference type="InterPro" id="IPR036291">
    <property type="entry name" value="NAD(P)-bd_dom_sf"/>
</dbReference>
<dbReference type="InterPro" id="IPR002347">
    <property type="entry name" value="SDR_fam"/>
</dbReference>
<dbReference type="PANTHER" id="PTHR43658:SF14">
    <property type="entry name" value="2,4-DIENOYL-COA REDUCTASE [(3E)-ENOYL-COA-PRODUCING], MITOCHONDRIAL"/>
    <property type="match status" value="1"/>
</dbReference>
<dbReference type="PANTHER" id="PTHR43658">
    <property type="entry name" value="SHORT-CHAIN DEHYDROGENASE/REDUCTASE"/>
    <property type="match status" value="1"/>
</dbReference>
<dbReference type="Pfam" id="PF13561">
    <property type="entry name" value="adh_short_C2"/>
    <property type="match status" value="1"/>
</dbReference>
<dbReference type="PRINTS" id="PR00081">
    <property type="entry name" value="GDHRDH"/>
</dbReference>
<dbReference type="SUPFAM" id="SSF51735">
    <property type="entry name" value="NAD(P)-binding Rossmann-fold domains"/>
    <property type="match status" value="1"/>
</dbReference>
<gene>
    <name type="primary">Decr1</name>
</gene>
<proteinExistence type="evidence at protein level"/>
<comment type="function">
    <text evidence="2">Auxiliary enzyme of beta-oxidation. It participates in the metabolism of unsaturated fatty enoyl-CoA esters having double bonds in both even- and odd-numbered positions in mitochondria. Catalyzes the NADP-dependent reduction of 2,4-dienoyl-CoA to yield trans-3-enoyl-CoA.</text>
</comment>
<comment type="catalytic activity">
    <reaction evidence="2">
        <text>a (2E,4E)-dienoyl-CoA + NADPH + H(+) = a 4,5-saturated-(3E)-enoyl-CoA + NADP(+)</text>
        <dbReference type="Rhea" id="RHEA:45912"/>
        <dbReference type="ChEBI" id="CHEBI:15378"/>
        <dbReference type="ChEBI" id="CHEBI:57783"/>
        <dbReference type="ChEBI" id="CHEBI:58349"/>
        <dbReference type="ChEBI" id="CHEBI:85101"/>
        <dbReference type="ChEBI" id="CHEBI:85493"/>
        <dbReference type="EC" id="1.3.1.124"/>
    </reaction>
</comment>
<comment type="catalytic activity">
    <reaction evidence="2">
        <text>a (2E,4Z)-dienoyl-CoA + NADPH + H(+) = a 4,5-saturated-(3E)-enoyl-CoA + NADP(+)</text>
        <dbReference type="Rhea" id="RHEA:61892"/>
        <dbReference type="ChEBI" id="CHEBI:15378"/>
        <dbReference type="ChEBI" id="CHEBI:57783"/>
        <dbReference type="ChEBI" id="CHEBI:58349"/>
        <dbReference type="ChEBI" id="CHEBI:85099"/>
        <dbReference type="ChEBI" id="CHEBI:85493"/>
        <dbReference type="EC" id="1.3.1.124"/>
    </reaction>
</comment>
<comment type="catalytic activity">
    <reaction evidence="2">
        <text>(2E,4E)-hexadienoyl-CoA + NADPH + H(+) = (3E)-hexenoyl-CoA + NADP(+)</text>
        <dbReference type="Rhea" id="RHEA:44912"/>
        <dbReference type="ChEBI" id="CHEBI:15378"/>
        <dbReference type="ChEBI" id="CHEBI:57783"/>
        <dbReference type="ChEBI" id="CHEBI:58349"/>
        <dbReference type="ChEBI" id="CHEBI:84788"/>
        <dbReference type="ChEBI" id="CHEBI:84790"/>
    </reaction>
</comment>
<comment type="subunit">
    <text evidence="2">Homotetramer.</text>
</comment>
<comment type="subcellular location">
    <subcellularLocation>
        <location evidence="2">Mitochondrion</location>
    </subcellularLocation>
</comment>
<comment type="similarity">
    <text evidence="4">Belongs to the short-chain dehydrogenases/reductases (SDR) family. 2,4-dienoyl-CoA reductase subfamily.</text>
</comment>
<sequence length="335" mass="36214">MALLGRAFFAGVSRLPCDPGPQRFFSFGTKTLYQSKDAPQSKFFQPVLKPMLPPDAFQGKVAFITGGGTGLGKAMTTFLSTLGAQCVIASRNIDVLKATAEEISSKTGNKVHAIRCDVRDPDMVHNTVLELIKVAGHPDVVINNAAGNFISPSERLTPNGWKTITDIVLNGTAYVTLEIGKQLIKAQKGAAFLAITTIYAESGSGFVMPSSSAKSGVEAMNKSLAAEWGRYGMRFNIIQPGPIKTKGAFSRLDPTGRFEKEMIDRIPCGRLGTMEELANLATFLCSDYASWINGAVIRFDGGEEVFLSGEFNSLKKVTKEEWDIIEGLIRKTKGS</sequence>
<protein>
    <recommendedName>
        <fullName>2,4-dienoyl-CoA reductase [(3E)-enoyl-CoA-producing], mitochondrial</fullName>
        <ecNumber evidence="2">1.3.1.124</ecNumber>
    </recommendedName>
    <alternativeName>
        <fullName>2,4-dienoyl-CoA reductase [NADPH]</fullName>
        <shortName>4-enoyl-CoA reductase [NADPH]</shortName>
    </alternativeName>
</protein>